<name>RS14_CUPTR</name>
<evidence type="ECO:0000255" key="1">
    <source>
        <dbReference type="HAMAP-Rule" id="MF_00537"/>
    </source>
</evidence>
<evidence type="ECO:0000305" key="2"/>
<gene>
    <name evidence="1" type="primary">rpsN</name>
    <name type="ordered locus">RALTA_A2930</name>
</gene>
<comment type="function">
    <text evidence="1">Binds 16S rRNA, required for the assembly of 30S particles and may also be responsible for determining the conformation of the 16S rRNA at the A site.</text>
</comment>
<comment type="subunit">
    <text evidence="1">Part of the 30S ribosomal subunit. Contacts proteins S3 and S10.</text>
</comment>
<comment type="similarity">
    <text evidence="1">Belongs to the universal ribosomal protein uS14 family.</text>
</comment>
<organism>
    <name type="scientific">Cupriavidus taiwanensis (strain DSM 17343 / BCRC 17206 / CCUG 44338 / CIP 107171 / LMG 19424 / R1)</name>
    <name type="common">Ralstonia taiwanensis (strain LMG 19424)</name>
    <dbReference type="NCBI Taxonomy" id="977880"/>
    <lineage>
        <taxon>Bacteria</taxon>
        <taxon>Pseudomonadati</taxon>
        <taxon>Pseudomonadota</taxon>
        <taxon>Betaproteobacteria</taxon>
        <taxon>Burkholderiales</taxon>
        <taxon>Burkholderiaceae</taxon>
        <taxon>Cupriavidus</taxon>
    </lineage>
</organism>
<accession>B3R7F5</accession>
<reference key="1">
    <citation type="journal article" date="2008" name="Genome Res.">
        <title>Genome sequence of the beta-rhizobium Cupriavidus taiwanensis and comparative genomics of rhizobia.</title>
        <authorList>
            <person name="Amadou C."/>
            <person name="Pascal G."/>
            <person name="Mangenot S."/>
            <person name="Glew M."/>
            <person name="Bontemps C."/>
            <person name="Capela D."/>
            <person name="Carrere S."/>
            <person name="Cruveiller S."/>
            <person name="Dossat C."/>
            <person name="Lajus A."/>
            <person name="Marchetti M."/>
            <person name="Poinsot V."/>
            <person name="Rouy Z."/>
            <person name="Servin B."/>
            <person name="Saad M."/>
            <person name="Schenowitz C."/>
            <person name="Barbe V."/>
            <person name="Batut J."/>
            <person name="Medigue C."/>
            <person name="Masson-Boivin C."/>
        </authorList>
    </citation>
    <scope>NUCLEOTIDE SEQUENCE [LARGE SCALE GENOMIC DNA]</scope>
    <source>
        <strain>DSM 17343 / BCRC 17206 / CCUG 44338 / CIP 107171 / LMG 19424 / R1</strain>
    </source>
</reference>
<protein>
    <recommendedName>
        <fullName evidence="1">Small ribosomal subunit protein uS14</fullName>
    </recommendedName>
    <alternativeName>
        <fullName evidence="2">30S ribosomal protein S14</fullName>
    </alternativeName>
</protein>
<sequence length="101" mass="11651">MAKLALIEREKKRAKLVAKYAAKRANLKAIIDDQEKSEEERYSARLELQQLPRNANPTRQRNRCAITGRPRGTFRKFGLARNKIREIAFKGEIPGLTKASW</sequence>
<feature type="chain" id="PRO_1000128374" description="Small ribosomal subunit protein uS14">
    <location>
        <begin position="1"/>
        <end position="101"/>
    </location>
</feature>
<dbReference type="EMBL" id="CU633749">
    <property type="protein sequence ID" value="CAQ70855.1"/>
    <property type="molecule type" value="Genomic_DNA"/>
</dbReference>
<dbReference type="RefSeq" id="WP_010812385.1">
    <property type="nucleotide sequence ID" value="NC_010528.1"/>
</dbReference>
<dbReference type="SMR" id="B3R7F5"/>
<dbReference type="GeneID" id="34310321"/>
<dbReference type="KEGG" id="cti:RALTA_A2930"/>
<dbReference type="eggNOG" id="COG0199">
    <property type="taxonomic scope" value="Bacteria"/>
</dbReference>
<dbReference type="HOGENOM" id="CLU_139869_0_1_4"/>
<dbReference type="BioCyc" id="CTAI977880:RALTA_RS14290-MONOMER"/>
<dbReference type="Proteomes" id="UP000001692">
    <property type="component" value="Chromosome 1"/>
</dbReference>
<dbReference type="GO" id="GO:0005737">
    <property type="term" value="C:cytoplasm"/>
    <property type="evidence" value="ECO:0007669"/>
    <property type="project" value="UniProtKB-ARBA"/>
</dbReference>
<dbReference type="GO" id="GO:0015935">
    <property type="term" value="C:small ribosomal subunit"/>
    <property type="evidence" value="ECO:0007669"/>
    <property type="project" value="TreeGrafter"/>
</dbReference>
<dbReference type="GO" id="GO:0019843">
    <property type="term" value="F:rRNA binding"/>
    <property type="evidence" value="ECO:0007669"/>
    <property type="project" value="UniProtKB-UniRule"/>
</dbReference>
<dbReference type="GO" id="GO:0003735">
    <property type="term" value="F:structural constituent of ribosome"/>
    <property type="evidence" value="ECO:0007669"/>
    <property type="project" value="InterPro"/>
</dbReference>
<dbReference type="GO" id="GO:0006412">
    <property type="term" value="P:translation"/>
    <property type="evidence" value="ECO:0007669"/>
    <property type="project" value="UniProtKB-UniRule"/>
</dbReference>
<dbReference type="FunFam" id="1.10.287.1480:FF:000001">
    <property type="entry name" value="30S ribosomal protein S14"/>
    <property type="match status" value="1"/>
</dbReference>
<dbReference type="Gene3D" id="1.10.287.1480">
    <property type="match status" value="1"/>
</dbReference>
<dbReference type="HAMAP" id="MF_00537">
    <property type="entry name" value="Ribosomal_uS14_1"/>
    <property type="match status" value="1"/>
</dbReference>
<dbReference type="InterPro" id="IPR001209">
    <property type="entry name" value="Ribosomal_uS14"/>
</dbReference>
<dbReference type="InterPro" id="IPR023036">
    <property type="entry name" value="Ribosomal_uS14_bac/plastid"/>
</dbReference>
<dbReference type="NCBIfam" id="NF006477">
    <property type="entry name" value="PRK08881.1"/>
    <property type="match status" value="1"/>
</dbReference>
<dbReference type="PANTHER" id="PTHR19836">
    <property type="entry name" value="30S RIBOSOMAL PROTEIN S14"/>
    <property type="match status" value="1"/>
</dbReference>
<dbReference type="PANTHER" id="PTHR19836:SF19">
    <property type="entry name" value="SMALL RIBOSOMAL SUBUNIT PROTEIN US14M"/>
    <property type="match status" value="1"/>
</dbReference>
<dbReference type="Pfam" id="PF00253">
    <property type="entry name" value="Ribosomal_S14"/>
    <property type="match status" value="1"/>
</dbReference>
<dbReference type="SUPFAM" id="SSF57716">
    <property type="entry name" value="Glucocorticoid receptor-like (DNA-binding domain)"/>
    <property type="match status" value="1"/>
</dbReference>
<proteinExistence type="inferred from homology"/>
<keyword id="KW-0687">Ribonucleoprotein</keyword>
<keyword id="KW-0689">Ribosomal protein</keyword>
<keyword id="KW-0694">RNA-binding</keyword>
<keyword id="KW-0699">rRNA-binding</keyword>